<feature type="chain" id="PRO_0000315721" description="Inactive N-acetylated-alpha-linked acidic dipeptidase-like protein 2">
    <location>
        <begin position="1"/>
        <end position="795"/>
    </location>
</feature>
<feature type="topological domain" description="Cytoplasmic" evidence="1">
    <location>
        <begin position="1"/>
        <end position="121"/>
    </location>
</feature>
<feature type="transmembrane region" description="Helical; Signal-anchor for type II membrane protein" evidence="1">
    <location>
        <begin position="122"/>
        <end position="142"/>
    </location>
</feature>
<feature type="topological domain" description="Extracellular" evidence="1">
    <location>
        <begin position="143"/>
        <end position="795"/>
    </location>
</feature>
<feature type="region of interest" description="Disordered" evidence="2">
    <location>
        <begin position="1"/>
        <end position="38"/>
    </location>
</feature>
<feature type="modified residue" description="Phosphoserine" evidence="9">
    <location>
        <position position="92"/>
    </location>
</feature>
<feature type="glycosylation site" description="N-linked (GlcNAc...) asparagine" evidence="1">
    <location>
        <position position="295"/>
    </location>
</feature>
<feature type="glycosylation site" description="N-linked (GlcNAc...) asparagine" evidence="1">
    <location>
        <position position="373"/>
    </location>
</feature>
<feature type="glycosylation site" description="N-linked (GlcNAc...) asparagine" evidence="1">
    <location>
        <position position="534"/>
    </location>
</feature>
<feature type="glycosylation site" description="N-linked (GlcNAc...) asparagine" evidence="1">
    <location>
        <position position="759"/>
    </location>
</feature>
<feature type="splice variant" id="VSP_030676" description="In isoform 2." evidence="6 7">
    <location>
        <begin position="1"/>
        <end position="17"/>
    </location>
</feature>
<feature type="splice variant" id="VSP_030677" description="In isoform 2." evidence="6 7">
    <original>LSSLEKAGFGGVLLYIDPCDLPKT</original>
    <variation>VGPVNVIQWFGQYFALFCWNYMLL</variation>
    <location>
        <begin position="314"/>
        <end position="337"/>
    </location>
</feature>
<feature type="splice variant" id="VSP_030678" description="In isoform 2." evidence="6 7">
    <location>
        <begin position="338"/>
        <end position="795"/>
    </location>
</feature>
<feature type="sequence variant" id="VAR_038288" description="In dbSNP:rs9823911." evidence="3 4">
    <original>G</original>
    <variation>S</variation>
    <location>
        <position position="68"/>
    </location>
</feature>
<feature type="sequence variant" id="VAR_038289" description="In dbSNP:rs9836841." evidence="3 4">
    <original>I</original>
    <variation>M</variation>
    <location>
        <position position="128"/>
    </location>
</feature>
<feature type="sequence variant" id="VAR_038290" description="In dbSNP:rs4371530.">
    <original>M</original>
    <variation>T</variation>
    <location>
        <position position="194"/>
    </location>
</feature>
<feature type="sequence variant" id="VAR_038291" description="In dbSNP:rs6802937." evidence="3 5">
    <original>P</original>
    <variation>S</variation>
    <location>
        <position position="385"/>
    </location>
</feature>
<feature type="sequence variant" id="VAR_038292" description="In dbSNP:rs9866564." evidence="3 5">
    <original>P</original>
    <variation>R</variation>
    <location>
        <position position="622"/>
    </location>
</feature>
<feature type="sequence variant" id="VAR_038293" description="In dbSNP:rs9826737." evidence="3 5">
    <original>L</original>
    <variation>S</variation>
    <location>
        <position position="677"/>
    </location>
</feature>
<gene>
    <name type="primary">NAALADL2</name>
</gene>
<accession>Q58DX5</accession>
<accession>Q658X9</accession>
<accession>Q6H9J8</accession>
<accession>Q6H9J9</accession>
<accession>Q6PG38</accession>
<sequence>MGENEASLPNTSLQGKKMAYQKVHADQRAPGHSQYLDNDDLQATALDLEWDMEKELEESGFDQFQLDGAENQNLGHSETIDLNLDSIQPATSPKGRFQRLQEESDYITHYTRSAPKSNRCNFCHVLKILCTATILFIFGILIGYYVHTNCPSDAPSSGTVDPQLYQEILKTIQAEDIKKSFRNLVQLYKNEDDMEISKKIKTQWTSLGLEDVQFVNYSVLLDLPGPSPSTVTLSSSGQCFHPNGQPCSEEARKDSSQDLLYSYAAYSAKGTLKAEVIDVSYGMADDLKRIRKIKNVTNQIALLKLGKLPLLYKLSSLEKAGFGGVLLYIDPCDLPKTVNPSHDTFMVSLNPGGDPSTPGYPSVDESFRQSRSNLTSLLVQPISAPLVAKLISSPKARTKNEACSSLELPNNEIRVVSMQVQTVTKLKTVTNVVGFVMGLTSPDRYIIVGSHHHTAHSYNGQEWASSTAIITAFIRALMSKVKRGWRPDRTIVFCSWGGTAFGNIGSYEWGEDFKKVLQKNVVAYISLHSPIRGNSSLYPVASPSLQQLVVEKNNFNCTRRAQCPETNISSIQIQGDADYFINHLGVPIVQFAYEDIKTLEGPSFLSEARFSTRATKIEEMDPSFNLHETITKLSGEVILQIANEPVLPFNALDIALEVQNNLKGDQPNTHQLLAMALRLRESAELFQSDEMRPANDPKERAPIRIRMLNDILQDMEKSFLVKQAPPGFYRNILYHLDEKTSRFSILIEAWEHCKPLASNETLQEALSEVLNSINSAQVYFKAGLDVFKSVLDGKN</sequence>
<protein>
    <recommendedName>
        <fullName>Inactive N-acetylated-alpha-linked acidic dipeptidase-like protein 2</fullName>
        <shortName>NAALADase L2</shortName>
    </recommendedName>
</protein>
<keyword id="KW-0025">Alternative splicing</keyword>
<keyword id="KW-0325">Glycoprotein</keyword>
<keyword id="KW-0472">Membrane</keyword>
<keyword id="KW-0597">Phosphoprotein</keyword>
<keyword id="KW-1267">Proteomics identification</keyword>
<keyword id="KW-1185">Reference proteome</keyword>
<keyword id="KW-0735">Signal-anchor</keyword>
<keyword id="KW-0812">Transmembrane</keyword>
<keyword id="KW-1133">Transmembrane helix</keyword>
<name>NADL2_HUMAN</name>
<organism>
    <name type="scientific">Homo sapiens</name>
    <name type="common">Human</name>
    <dbReference type="NCBI Taxonomy" id="9606"/>
    <lineage>
        <taxon>Eukaryota</taxon>
        <taxon>Metazoa</taxon>
        <taxon>Chordata</taxon>
        <taxon>Craniata</taxon>
        <taxon>Vertebrata</taxon>
        <taxon>Euteleostomi</taxon>
        <taxon>Mammalia</taxon>
        <taxon>Eutheria</taxon>
        <taxon>Euarchontoglires</taxon>
        <taxon>Primates</taxon>
        <taxon>Haplorrhini</taxon>
        <taxon>Catarrhini</taxon>
        <taxon>Hominidae</taxon>
        <taxon>Homo</taxon>
    </lineage>
</organism>
<proteinExistence type="evidence at protein level"/>
<comment type="function">
    <text>May be catalytically inactive.</text>
</comment>
<comment type="interaction">
    <interactant intactId="EBI-10178964">
        <id>Q58DX5</id>
    </interactant>
    <interactant intactId="EBI-10178951">
        <id>O00155</id>
        <label>GPR25</label>
    </interactant>
    <organismsDiffer>false</organismsDiffer>
    <experiments>3</experiments>
</comment>
<comment type="interaction">
    <interactant intactId="EBI-10178964">
        <id>Q58DX5</id>
    </interactant>
    <interactant intactId="EBI-10232876">
        <id>Q14416</id>
        <label>GRM2</label>
    </interactant>
    <organismsDiffer>false</organismsDiffer>
    <experiments>3</experiments>
</comment>
<comment type="interaction">
    <interactant intactId="EBI-10178964">
        <id>Q58DX5</id>
    </interactant>
    <interactant intactId="EBI-2866431">
        <id>Q9Y287</id>
        <label>ITM2B</label>
    </interactant>
    <organismsDiffer>false</organismsDiffer>
    <experiments>3</experiments>
</comment>
<comment type="interaction">
    <interactant intactId="EBI-10178964">
        <id>Q58DX5</id>
    </interactant>
    <interactant intactId="EBI-3267258">
        <id>Q86VI4</id>
        <label>LAPTM4B</label>
    </interactant>
    <organismsDiffer>false</organismsDiffer>
    <experiments>3</experiments>
</comment>
<comment type="interaction">
    <interactant intactId="EBI-10178964">
        <id>Q58DX5</id>
    </interactant>
    <interactant intactId="EBI-10294651">
        <id>Q99726</id>
        <label>SLC30A3</label>
    </interactant>
    <organismsDiffer>false</organismsDiffer>
    <experiments>3</experiments>
</comment>
<comment type="subcellular location">
    <subcellularLocation>
        <location evidence="8">Membrane</location>
        <topology evidence="8">Single-pass type II membrane protein</topology>
    </subcellularLocation>
</comment>
<comment type="alternative products">
    <event type="alternative splicing"/>
    <isoform>
        <id>Q58DX5-1</id>
        <name>1</name>
        <sequence type="displayed"/>
    </isoform>
    <isoform>
        <id>Q58DX5-2</id>
        <name>2</name>
        <sequence type="described" ref="VSP_030676 VSP_030677 VSP_030678"/>
    </isoform>
</comment>
<comment type="tissue specificity">
    <text>Expressed at higher level in kidney and placenta. In embryo, it is mainly confined to duodenal and stomach endoderm, mesonephros, metanephros and pancreas.</text>
</comment>
<comment type="miscellaneous">
    <text>The gene maps to 3q26.31, a region associated with Cornelia de Lange syndrome. However, PubMed:15168106 failed to identify specific mutations in a panel of DNA samples from patients with Cornelia de Lange syndrome.</text>
</comment>
<comment type="similarity">
    <text evidence="8">Belongs to the peptidase M28 family. M28B subfamily.</text>
</comment>
<comment type="caution">
    <text evidence="8">Although related to the peptidase M28 family, it lacks the conserved zinc-binding and active sites and therefore has probably lost hydrolase activity.</text>
</comment>
<comment type="sequence caution" evidence="8">
    <conflict type="miscellaneous discrepancy">
        <sequence resource="EMBL-CDS" id="CAE54974"/>
    </conflict>
    <text>Contaminating sequence at the C-terminus.</text>
</comment>
<comment type="sequence caution" evidence="8">
    <conflict type="frameshift">
        <sequence resource="EMBL-CDS" id="CAH56310"/>
    </conflict>
</comment>
<evidence type="ECO:0000255" key="1"/>
<evidence type="ECO:0000256" key="2">
    <source>
        <dbReference type="SAM" id="MobiDB-lite"/>
    </source>
</evidence>
<evidence type="ECO:0000269" key="3">
    <source>
    </source>
</evidence>
<evidence type="ECO:0000269" key="4">
    <source>
    </source>
</evidence>
<evidence type="ECO:0000269" key="5">
    <source>
    </source>
</evidence>
<evidence type="ECO:0000303" key="6">
    <source>
    </source>
</evidence>
<evidence type="ECO:0000303" key="7">
    <source>
    </source>
</evidence>
<evidence type="ECO:0000305" key="8"/>
<evidence type="ECO:0007744" key="9">
    <source>
    </source>
</evidence>
<dbReference type="EMBL" id="AJ607395">
    <property type="protein sequence ID" value="CAE54973.1"/>
    <property type="molecule type" value="Genomic_DNA"/>
</dbReference>
<dbReference type="EMBL" id="AJ607396">
    <property type="protein sequence ID" value="CAE54974.2"/>
    <property type="status" value="ALT_SEQ"/>
    <property type="molecule type" value="mRNA"/>
</dbReference>
<dbReference type="EMBL" id="BC057243">
    <property type="protein sequence ID" value="AAH57243.1"/>
    <property type="molecule type" value="mRNA"/>
</dbReference>
<dbReference type="EMBL" id="AL832931">
    <property type="protein sequence ID" value="CAH56310.1"/>
    <property type="status" value="ALT_FRAME"/>
    <property type="molecule type" value="mRNA"/>
</dbReference>
<dbReference type="EMBL" id="BN000432">
    <property type="protein sequence ID" value="CAE75743.1"/>
    <property type="molecule type" value="mRNA"/>
</dbReference>
<dbReference type="CCDS" id="CCDS46960.1">
    <molecule id="Q58DX5-1"/>
</dbReference>
<dbReference type="RefSeq" id="NP_996898.2">
    <molecule id="Q58DX5-1"/>
    <property type="nucleotide sequence ID" value="NM_207015.3"/>
</dbReference>
<dbReference type="SMR" id="Q58DX5"/>
<dbReference type="BioGRID" id="129052">
    <property type="interactions" value="18"/>
</dbReference>
<dbReference type="FunCoup" id="Q58DX5">
    <property type="interactions" value="850"/>
</dbReference>
<dbReference type="IntAct" id="Q58DX5">
    <property type="interactions" value="15"/>
</dbReference>
<dbReference type="MINT" id="Q58DX5"/>
<dbReference type="STRING" id="9606.ENSP00000404705"/>
<dbReference type="MEROPS" id="M28.975"/>
<dbReference type="GlyConnect" id="1397">
    <property type="glycosylation" value="3 N-Linked glycans (2 sites)"/>
</dbReference>
<dbReference type="GlyCosmos" id="Q58DX5">
    <property type="glycosylation" value="4 sites, 3 glycans"/>
</dbReference>
<dbReference type="GlyGen" id="Q58DX5">
    <property type="glycosylation" value="6 sites, 10 N-linked glycans (3 sites)"/>
</dbReference>
<dbReference type="iPTMnet" id="Q58DX5"/>
<dbReference type="PhosphoSitePlus" id="Q58DX5"/>
<dbReference type="SwissPalm" id="Q58DX5"/>
<dbReference type="BioMuta" id="NAALADL2"/>
<dbReference type="DMDM" id="296439292"/>
<dbReference type="jPOST" id="Q58DX5"/>
<dbReference type="MassIVE" id="Q58DX5"/>
<dbReference type="PaxDb" id="9606-ENSP00000404705"/>
<dbReference type="PeptideAtlas" id="Q58DX5"/>
<dbReference type="ProteomicsDB" id="62609">
    <molecule id="Q58DX5-1"/>
</dbReference>
<dbReference type="ProteomicsDB" id="62610">
    <molecule id="Q58DX5-2"/>
</dbReference>
<dbReference type="Antibodypedia" id="9309">
    <property type="antibodies" value="108 antibodies from 19 providers"/>
</dbReference>
<dbReference type="DNASU" id="254827"/>
<dbReference type="Ensembl" id="ENST00000454872.6">
    <molecule id="Q58DX5-1"/>
    <property type="protein sequence ID" value="ENSP00000404705.1"/>
    <property type="gene ID" value="ENSG00000177694.16"/>
</dbReference>
<dbReference type="GeneID" id="254827"/>
<dbReference type="KEGG" id="hsa:254827"/>
<dbReference type="MANE-Select" id="ENST00000454872.6">
    <property type="protein sequence ID" value="ENSP00000404705.1"/>
    <property type="RefSeq nucleotide sequence ID" value="NM_207015.3"/>
    <property type="RefSeq protein sequence ID" value="NP_996898.2"/>
</dbReference>
<dbReference type="UCSC" id="uc003fit.4">
    <molecule id="Q58DX5-1"/>
    <property type="organism name" value="human"/>
</dbReference>
<dbReference type="AGR" id="HGNC:23219"/>
<dbReference type="CTD" id="254827"/>
<dbReference type="DisGeNET" id="254827"/>
<dbReference type="GeneCards" id="NAALADL2"/>
<dbReference type="HGNC" id="HGNC:23219">
    <property type="gene designation" value="NAALADL2"/>
</dbReference>
<dbReference type="HPA" id="ENSG00000177694">
    <property type="expression patterns" value="Low tissue specificity"/>
</dbReference>
<dbReference type="MIM" id="608806">
    <property type="type" value="gene"/>
</dbReference>
<dbReference type="neXtProt" id="NX_Q58DX5"/>
<dbReference type="OpenTargets" id="ENSG00000177694"/>
<dbReference type="PharmGKB" id="PA142671295"/>
<dbReference type="VEuPathDB" id="HostDB:ENSG00000177694"/>
<dbReference type="eggNOG" id="KOG2195">
    <property type="taxonomic scope" value="Eukaryota"/>
</dbReference>
<dbReference type="GeneTree" id="ENSGT01030000234598"/>
<dbReference type="InParanoid" id="Q58DX5"/>
<dbReference type="OMA" id="GYYAHKK"/>
<dbReference type="OrthoDB" id="5841748at2759"/>
<dbReference type="PAN-GO" id="Q58DX5">
    <property type="GO annotations" value="0 GO annotations based on evolutionary models"/>
</dbReference>
<dbReference type="PhylomeDB" id="Q58DX5"/>
<dbReference type="TreeFam" id="TF312981"/>
<dbReference type="PathwayCommons" id="Q58DX5"/>
<dbReference type="SignaLink" id="Q58DX5"/>
<dbReference type="BioGRID-ORCS" id="254827">
    <property type="hits" value="6 hits in 1143 CRISPR screens"/>
</dbReference>
<dbReference type="ChiTaRS" id="NAALADL2">
    <property type="organism name" value="human"/>
</dbReference>
<dbReference type="GenomeRNAi" id="254827"/>
<dbReference type="Pharos" id="Q58DX5">
    <property type="development level" value="Tbio"/>
</dbReference>
<dbReference type="PRO" id="PR:Q58DX5"/>
<dbReference type="Proteomes" id="UP000005640">
    <property type="component" value="Chromosome 3"/>
</dbReference>
<dbReference type="RNAct" id="Q58DX5">
    <property type="molecule type" value="protein"/>
</dbReference>
<dbReference type="Bgee" id="ENSG00000177694">
    <property type="expression patterns" value="Expressed in calcaneal tendon and 122 other cell types or tissues"/>
</dbReference>
<dbReference type="ExpressionAtlas" id="Q58DX5">
    <property type="expression patterns" value="baseline and differential"/>
</dbReference>
<dbReference type="GO" id="GO:0016020">
    <property type="term" value="C:membrane"/>
    <property type="evidence" value="ECO:0007669"/>
    <property type="project" value="UniProtKB-SubCell"/>
</dbReference>
<dbReference type="GO" id="GO:0005654">
    <property type="term" value="C:nucleoplasm"/>
    <property type="evidence" value="ECO:0000314"/>
    <property type="project" value="HPA"/>
</dbReference>
<dbReference type="GO" id="GO:0009617">
    <property type="term" value="P:response to bacterium"/>
    <property type="evidence" value="ECO:0007669"/>
    <property type="project" value="Ensembl"/>
</dbReference>
<dbReference type="CDD" id="cd03874">
    <property type="entry name" value="M28_PMSA_TfR_like"/>
    <property type="match status" value="1"/>
</dbReference>
<dbReference type="FunFam" id="3.40.630.10:FF:000101">
    <property type="entry name" value="N-acetylated alpha-linked acidic dipeptidase like 1"/>
    <property type="match status" value="1"/>
</dbReference>
<dbReference type="FunFam" id="1.20.930.40:FF:000004">
    <property type="entry name" value="N-acetylated alpha-linked acidic dipeptidase like 2"/>
    <property type="match status" value="1"/>
</dbReference>
<dbReference type="FunFam" id="3.50.30.30:FF:000028">
    <property type="entry name" value="N-acetylated alpha-linked acidic dipeptidase like 2"/>
    <property type="match status" value="1"/>
</dbReference>
<dbReference type="Gene3D" id="3.50.30.30">
    <property type="match status" value="1"/>
</dbReference>
<dbReference type="Gene3D" id="1.20.930.40">
    <property type="entry name" value="Transferrin receptor-like, dimerisation domain"/>
    <property type="match status" value="1"/>
</dbReference>
<dbReference type="Gene3D" id="3.40.630.10">
    <property type="entry name" value="Zn peptidases"/>
    <property type="match status" value="1"/>
</dbReference>
<dbReference type="InterPro" id="IPR046450">
    <property type="entry name" value="PA_dom_sf"/>
</dbReference>
<dbReference type="InterPro" id="IPR007484">
    <property type="entry name" value="Peptidase_M28"/>
</dbReference>
<dbReference type="InterPro" id="IPR039373">
    <property type="entry name" value="Peptidase_M28B"/>
</dbReference>
<dbReference type="InterPro" id="IPR036757">
    <property type="entry name" value="TFR-like_dimer_dom_sf"/>
</dbReference>
<dbReference type="PANTHER" id="PTHR10404:SF32">
    <property type="entry name" value="INACTIVE N-ACETYLATED-ALPHA-LINKED ACIDIC DIPEPTIDASE-LIKE PROTEIN 2"/>
    <property type="match status" value="1"/>
</dbReference>
<dbReference type="PANTHER" id="PTHR10404">
    <property type="entry name" value="N-ACETYLATED-ALPHA-LINKED ACIDIC DIPEPTIDASE"/>
    <property type="match status" value="1"/>
</dbReference>
<dbReference type="Pfam" id="PF04389">
    <property type="entry name" value="Peptidase_M28"/>
    <property type="match status" value="1"/>
</dbReference>
<dbReference type="SUPFAM" id="SSF52025">
    <property type="entry name" value="PA domain"/>
    <property type="match status" value="1"/>
</dbReference>
<dbReference type="SUPFAM" id="SSF47672">
    <property type="entry name" value="Transferrin receptor-like dimerisation domain"/>
    <property type="match status" value="1"/>
</dbReference>
<dbReference type="SUPFAM" id="SSF53187">
    <property type="entry name" value="Zn-dependent exopeptidases"/>
    <property type="match status" value="1"/>
</dbReference>
<reference key="1">
    <citation type="journal article" date="2004" name="Hum. Genet.">
        <title>A giant novel gene undergoing extensive alternative splicing is severed by a Cornelia de Lange-associated translocation breakpoint at 3q26.3.</title>
        <authorList>
            <person name="Tonkin E.T."/>
            <person name="Smith M."/>
            <person name="Eichhorn P."/>
            <person name="Jones S."/>
            <person name="Imamwerdi B."/>
            <person name="Lindsay S."/>
            <person name="Jackson M."/>
            <person name="Wang T.-J."/>
            <person name="Ireland M."/>
            <person name="Burn J."/>
            <person name="Krantz I.D."/>
            <person name="Carr P."/>
            <person name="Strachan T."/>
        </authorList>
    </citation>
    <scope>NUCLEOTIDE SEQUENCE [GENOMIC DNA]</scope>
    <scope>NUCLEOTIDE SEQUENCE [MRNA] OF 1-291 (ISOFORM 2)</scope>
    <scope>IDENTIFICATION (ISOFORM 1)</scope>
    <scope>VARIANTS SER-68; MET-128; SER-385; ARG-622 AND SER-677</scope>
</reference>
<reference key="2">
    <citation type="journal article" date="2004" name="Genome Res.">
        <title>The status, quality, and expansion of the NIH full-length cDNA project: the Mammalian Gene Collection (MGC).</title>
        <authorList>
            <consortium name="The MGC Project Team"/>
        </authorList>
    </citation>
    <scope>NUCLEOTIDE SEQUENCE [LARGE SCALE MRNA] (ISOFORM 2)</scope>
    <scope>VARIANTS SER-68 AND MET-128</scope>
    <source>
        <tissue>Kidney</tissue>
    </source>
</reference>
<reference key="3">
    <citation type="journal article" date="2007" name="BMC Genomics">
        <title>The full-ORF clone resource of the German cDNA consortium.</title>
        <authorList>
            <person name="Bechtel S."/>
            <person name="Rosenfelder H."/>
            <person name="Duda A."/>
            <person name="Schmidt C.P."/>
            <person name="Ernst U."/>
            <person name="Wellenreuther R."/>
            <person name="Mehrle A."/>
            <person name="Schuster C."/>
            <person name="Bahr A."/>
            <person name="Bloecker H."/>
            <person name="Heubner D."/>
            <person name="Hoerlein A."/>
            <person name="Michel G."/>
            <person name="Wedler H."/>
            <person name="Koehrer K."/>
            <person name="Ottenwaelder B."/>
            <person name="Poustka A."/>
            <person name="Wiemann S."/>
            <person name="Schupp I."/>
        </authorList>
    </citation>
    <scope>NUCLEOTIDE SEQUENCE [LARGE SCALE MRNA] OF 277-795</scope>
    <scope>VARIANTS SER-385; ARG-622 AND SER-677</scope>
    <source>
        <tissue>Stomach</tissue>
    </source>
</reference>
<reference key="4">
    <citation type="journal article" date="2014" name="J. Proteomics">
        <title>An enzyme assisted RP-RPLC approach for in-depth analysis of human liver phosphoproteome.</title>
        <authorList>
            <person name="Bian Y."/>
            <person name="Song C."/>
            <person name="Cheng K."/>
            <person name="Dong M."/>
            <person name="Wang F."/>
            <person name="Huang J."/>
            <person name="Sun D."/>
            <person name="Wang L."/>
            <person name="Ye M."/>
            <person name="Zou H."/>
        </authorList>
    </citation>
    <scope>PHOSPHORYLATION [LARGE SCALE ANALYSIS] AT SER-92</scope>
    <scope>IDENTIFICATION BY MASS SPECTROMETRY [LARGE SCALE ANALYSIS]</scope>
    <source>
        <tissue>Liver</tissue>
    </source>
</reference>